<accession>G0RS98</accession>
<gene>
    <name evidence="5" type="primary">VEL2</name>
    <name type="ORF">TRIREDRAFT_40551</name>
</gene>
<feature type="chain" id="PRO_0000435785" description="Velvet complex subunit 2">
    <location>
        <begin position="1"/>
        <end position="490"/>
    </location>
</feature>
<feature type="domain" description="Velvet" evidence="2">
    <location>
        <begin position="164"/>
        <end position="474"/>
    </location>
</feature>
<feature type="region of interest" description="Disordered" evidence="3">
    <location>
        <begin position="23"/>
        <end position="148"/>
    </location>
</feature>
<feature type="region of interest" description="Disordered" evidence="3">
    <location>
        <begin position="295"/>
        <end position="316"/>
    </location>
</feature>
<feature type="compositionally biased region" description="Basic residues" evidence="3">
    <location>
        <begin position="54"/>
        <end position="70"/>
    </location>
</feature>
<feature type="compositionally biased region" description="Basic and acidic residues" evidence="3">
    <location>
        <begin position="112"/>
        <end position="131"/>
    </location>
</feature>
<feature type="compositionally biased region" description="Polar residues" evidence="3">
    <location>
        <begin position="295"/>
        <end position="313"/>
    </location>
</feature>
<comment type="function">
    <text evidence="1 4">Component of the velvet transcription factor complex that controls sexual/asexual developmental ratio in response to light, promoting sexual development in the darkness while stimulating asexual sporulation under illumination (By similarity). The velvet complex acts as a global regulator for secondary metabolite gene expression (By similarity). Component of the VEL2-VOS1 heterodimeric complex that plays a dual role in activating genes associated with spore maturation and repressing certain development-associated genes (By similarity). The VEL2-VOS1 complex binds DNA through the DNA-binding domain of VOS1 that recognizes an 11-nucleotide consensus sequence 5'-CTGGCCGCGGC-3' consisting of two motifs in the promoters of key developmental regulatory genes (By similarity). Regulates expression of cellulase-encoding genes such as the cellobiohydrolase-encoding genes cbh1 and cbh2, the endo-beta-1,4-glucanase-encoding genes egl1 and egl2, and the beta-glucosidase-encoding gene bgl1 (PubMed:26481618).</text>
</comment>
<comment type="subunit">
    <text evidence="1">Component of the heterotrimeric velvet complex composed of LAE1, VEL1 and VEL2; VEL1 acting as a bridging protein between LAE1 and VEL2 (By similarity). Forms a heterodimeric complex with VOS1; the formation of the VEL2-VOS1 complex is light-dependent (By similarity).</text>
</comment>
<comment type="subcellular location">
    <subcellularLocation>
        <location evidence="1">Nucleus</location>
    </subcellularLocation>
    <subcellularLocation>
        <location evidence="1">Cytoplasm</location>
    </subcellularLocation>
    <text evidence="1">Nuclear localization is mediated by VEL1 (By similarity).</text>
</comment>
<comment type="disruption phenotype">
    <text evidence="4">Leads to a significantly hampered growth when cellulose is used as the sole carbon source (PubMed:26481618). Decreases strongly sporulation and down-regulates of cellulase-coding genes (PubMed:26481618).</text>
</comment>
<comment type="similarity">
    <text evidence="6">Belongs to the velvet family. VelB subfamily.</text>
</comment>
<comment type="sequence caution" evidence="6">
    <conflict type="erroneous gene model prediction">
        <sequence resource="EMBL-CDS" id="EGR45802"/>
    </conflict>
</comment>
<sequence>MPSLIPPIVSASSASNSAALDHLYHHQPPPRLPLGAVPQSPIQSQAPPPPHLHPPSHHFQLHPGHGHHQQPHHERDHRLPPPVASYSAHSHHLQHDPLPQRLESSQPGHPGAAEHRDHPQHALDEPSRSHDPYPSMATGALVHSESQQPASASLLLPISNVEEATGRRYHLDVVQQPRRARMCGFGDKDRRPITPPPCVRLIIIDVATGKEIDCNDIDHSMFVLNVDLWNEDGTREVNLVRSSTSSSPSVSSTVTYPYGSISVGESSHTYGQSAHPPSREAPYSVSQTASYAPEYQTQPTYSQGSSAYPSNGTYGPPQQYFPQHQAYRTETGPPGAMQTTVGGFRGYAQDQNALTKMAVVGGQPQGMFTRNLIGSLAASAFRLADTSEHLGIWFVLQDLSVRTEGPFRLRFSFVNVGPLAGQNGAKVNTGRAPILASCFSEVFNVYSAKKFPGVCESTPLSKTFAAQGIKIPIRKDANLKGGDGEDDYGD</sequence>
<proteinExistence type="inferred from homology"/>
<dbReference type="EMBL" id="GL985076">
    <property type="protein sequence ID" value="EGR45802.1"/>
    <property type="status" value="ALT_SEQ"/>
    <property type="molecule type" value="Genomic_DNA"/>
</dbReference>
<dbReference type="RefSeq" id="XP_006968133.1">
    <property type="nucleotide sequence ID" value="XM_006968071.1"/>
</dbReference>
<dbReference type="SMR" id="G0RS98"/>
<dbReference type="STRING" id="431241.G0RS98"/>
<dbReference type="GeneID" id="18484792"/>
<dbReference type="KEGG" id="tre:TRIREDRAFT_40551"/>
<dbReference type="VEuPathDB" id="FungiDB:TRIREDRAFT_40551"/>
<dbReference type="eggNOG" id="ENOG502S1B4">
    <property type="taxonomic scope" value="Eukaryota"/>
</dbReference>
<dbReference type="HOGENOM" id="CLU_022491_0_0_1"/>
<dbReference type="OrthoDB" id="1746739at2759"/>
<dbReference type="Proteomes" id="UP000008984">
    <property type="component" value="Unassembled WGS sequence"/>
</dbReference>
<dbReference type="GO" id="GO:0005737">
    <property type="term" value="C:cytoplasm"/>
    <property type="evidence" value="ECO:0007669"/>
    <property type="project" value="UniProtKB-SubCell"/>
</dbReference>
<dbReference type="GO" id="GO:0005634">
    <property type="term" value="C:nucleus"/>
    <property type="evidence" value="ECO:0007669"/>
    <property type="project" value="UniProtKB-SubCell"/>
</dbReference>
<dbReference type="GO" id="GO:0030435">
    <property type="term" value="P:sporulation resulting in formation of a cellular spore"/>
    <property type="evidence" value="ECO:0007669"/>
    <property type="project" value="UniProtKB-KW"/>
</dbReference>
<dbReference type="Gene3D" id="2.60.40.3960">
    <property type="entry name" value="Velvet domain"/>
    <property type="match status" value="2"/>
</dbReference>
<dbReference type="InterPro" id="IPR021740">
    <property type="entry name" value="Velvet"/>
</dbReference>
<dbReference type="InterPro" id="IPR037525">
    <property type="entry name" value="Velvet_dom"/>
</dbReference>
<dbReference type="InterPro" id="IPR038491">
    <property type="entry name" value="Velvet_dom_sf"/>
</dbReference>
<dbReference type="PANTHER" id="PTHR33572">
    <property type="entry name" value="SPORE DEVELOPMENT REGULATOR VOSA"/>
    <property type="match status" value="1"/>
</dbReference>
<dbReference type="PANTHER" id="PTHR33572:SF3">
    <property type="entry name" value="VELVET COMPLEX SUBUNIT B"/>
    <property type="match status" value="1"/>
</dbReference>
<dbReference type="Pfam" id="PF11754">
    <property type="entry name" value="Velvet"/>
    <property type="match status" value="1"/>
</dbReference>
<dbReference type="PROSITE" id="PS51821">
    <property type="entry name" value="VELVET"/>
    <property type="match status" value="1"/>
</dbReference>
<name>VELB_HYPJQ</name>
<keyword id="KW-0963">Cytoplasm</keyword>
<keyword id="KW-0539">Nucleus</keyword>
<keyword id="KW-1185">Reference proteome</keyword>
<keyword id="KW-0749">Sporulation</keyword>
<keyword id="KW-0804">Transcription</keyword>
<keyword id="KW-0805">Transcription regulation</keyword>
<organism>
    <name type="scientific">Hypocrea jecorina (strain QM6a)</name>
    <name type="common">Trichoderma reesei</name>
    <dbReference type="NCBI Taxonomy" id="431241"/>
    <lineage>
        <taxon>Eukaryota</taxon>
        <taxon>Fungi</taxon>
        <taxon>Dikarya</taxon>
        <taxon>Ascomycota</taxon>
        <taxon>Pezizomycotina</taxon>
        <taxon>Sordariomycetes</taxon>
        <taxon>Hypocreomycetidae</taxon>
        <taxon>Hypocreales</taxon>
        <taxon>Hypocreaceae</taxon>
        <taxon>Trichoderma</taxon>
    </lineage>
</organism>
<reference key="1">
    <citation type="journal article" date="2008" name="Nat. Biotechnol.">
        <title>Genome sequencing and analysis of the biomass-degrading fungus Trichoderma reesei (syn. Hypocrea jecorina).</title>
        <authorList>
            <person name="Martinez D."/>
            <person name="Berka R.M."/>
            <person name="Henrissat B."/>
            <person name="Saloheimo M."/>
            <person name="Arvas M."/>
            <person name="Baker S.E."/>
            <person name="Chapman J."/>
            <person name="Chertkov O."/>
            <person name="Coutinho P.M."/>
            <person name="Cullen D."/>
            <person name="Danchin E.G."/>
            <person name="Grigoriev I.V."/>
            <person name="Harris P."/>
            <person name="Jackson M."/>
            <person name="Kubicek C.P."/>
            <person name="Han C.S."/>
            <person name="Ho I."/>
            <person name="Larrondo L.F."/>
            <person name="de Leon A.L."/>
            <person name="Magnuson J.K."/>
            <person name="Merino S."/>
            <person name="Misra M."/>
            <person name="Nelson B."/>
            <person name="Putnam N."/>
            <person name="Robbertse B."/>
            <person name="Salamov A.A."/>
            <person name="Schmoll M."/>
            <person name="Terry A."/>
            <person name="Thayer N."/>
            <person name="Westerholm-Parvinen A."/>
            <person name="Schoch C.L."/>
            <person name="Yao J."/>
            <person name="Barabote R."/>
            <person name="Nelson M.A."/>
            <person name="Detter C."/>
            <person name="Bruce D."/>
            <person name="Kuske C.R."/>
            <person name="Xie G."/>
            <person name="Richardson P."/>
            <person name="Rokhsar D.S."/>
            <person name="Lucas S.M."/>
            <person name="Rubin E.M."/>
            <person name="Dunn-Coleman N."/>
            <person name="Ward M."/>
            <person name="Brettin T.S."/>
        </authorList>
    </citation>
    <scope>NUCLEOTIDE SEQUENCE [LARGE SCALE GENOMIC DNA]</scope>
    <source>
        <strain>QM6a</strain>
    </source>
</reference>
<reference key="2">
    <citation type="journal article" date="2016" name="Appl. Microbiol. Biotechnol.">
        <title>Regulation of cellulase expression, sporulation, and morphogenesis by velvet family proteins in Trichoderma reesei.</title>
        <authorList>
            <person name="Liu K."/>
            <person name="Dong Y."/>
            <person name="Wang F."/>
            <person name="Jiang B."/>
            <person name="Wang M."/>
            <person name="Fang X."/>
        </authorList>
    </citation>
    <scope>FUNCTION</scope>
    <scope>DISRUPTION PHENOTYPE</scope>
</reference>
<evidence type="ECO:0000250" key="1">
    <source>
        <dbReference type="UniProtKB" id="C8VTS4"/>
    </source>
</evidence>
<evidence type="ECO:0000255" key="2">
    <source>
        <dbReference type="PROSITE-ProRule" id="PRU01165"/>
    </source>
</evidence>
<evidence type="ECO:0000256" key="3">
    <source>
        <dbReference type="SAM" id="MobiDB-lite"/>
    </source>
</evidence>
<evidence type="ECO:0000269" key="4">
    <source>
    </source>
</evidence>
<evidence type="ECO:0000303" key="5">
    <source>
    </source>
</evidence>
<evidence type="ECO:0000305" key="6"/>
<protein>
    <recommendedName>
        <fullName evidence="6">Velvet complex subunit 2</fullName>
    </recommendedName>
</protein>